<keyword id="KW-0067">ATP-binding</keyword>
<keyword id="KW-0143">Chaperone</keyword>
<keyword id="KW-0547">Nucleotide-binding</keyword>
<keyword id="KW-0597">Phosphoprotein</keyword>
<keyword id="KW-1185">Reference proteome</keyword>
<keyword id="KW-0346">Stress response</keyword>
<sequence>MGKIIGIDLGTTNSCVAIMDGGKARVLENAEGDRTTPSIIAYTQDGETLVGQPAKRQAVTNPQNTLFAIKRLIGRRFQDEEVQRDIKIMPFKIVGADNGDAWLDVKGQRVAPPQISAEVLKKMKKTAEDYLGEAVTEAVITVPAYFNDAQRQATKDAGRIAGLDVKRIINEPTAAALAYGLDKGQGNRTIAVYDLGGGTFDISIIEIDEVDGEKTFEVLATNGDTHLGGEDFDSRMINYLVAEFKKDQGIDLHNDPLAMQRLKEAAEKAKIELSSAQQTDVNLPYITADATGPKHLNIKVTRAKLESLVEDLVTRSIDPLKVALQDAGLSVSDINDVILVGGQTRMPMVQAKVAEFFGKEPRKDVNPDEAVAVGAAVQGGVLAGEVKDVLLLDVTPLSLGIETMGGVMTSLITKNTTIPTKHSQVFSTAEDNQSAVTIHVVQGERKRAADNKSLGQFNLDGIQNAPRGMPQIEVTFDIDADGILHVSAKDKNSGKEQKITIKASSGLNDEEIEKMVRDAEANAESDRKFEELVQTRNQGDQAAHSTRKQLDEAGDKLPAEDKAPIEAALTELNTALKGEDKAEIEAKIQALMEVSTKLMEFAQQQQAAGGAADAAEGAKKDDDVVDAEFEEVKDSKK</sequence>
<gene>
    <name evidence="1" type="primary">dnaK</name>
    <name type="ordered locus">ETA_07050</name>
</gene>
<organism>
    <name type="scientific">Erwinia tasmaniensis (strain DSM 17950 / CFBP 7177 / CIP 109463 / NCPPB 4357 / Et1/99)</name>
    <dbReference type="NCBI Taxonomy" id="465817"/>
    <lineage>
        <taxon>Bacteria</taxon>
        <taxon>Pseudomonadati</taxon>
        <taxon>Pseudomonadota</taxon>
        <taxon>Gammaproteobacteria</taxon>
        <taxon>Enterobacterales</taxon>
        <taxon>Erwiniaceae</taxon>
        <taxon>Erwinia</taxon>
    </lineage>
</organism>
<protein>
    <recommendedName>
        <fullName evidence="1">Chaperone protein DnaK</fullName>
    </recommendedName>
    <alternativeName>
        <fullName evidence="1">HSP70</fullName>
    </alternativeName>
    <alternativeName>
        <fullName evidence="1">Heat shock 70 kDa protein</fullName>
    </alternativeName>
    <alternativeName>
        <fullName evidence="1">Heat shock protein 70</fullName>
    </alternativeName>
</protein>
<comment type="function">
    <text evidence="1">Acts as a chaperone.</text>
</comment>
<comment type="induction">
    <text evidence="1">By stress conditions e.g. heat shock.</text>
</comment>
<comment type="similarity">
    <text evidence="1">Belongs to the heat shock protein 70 family.</text>
</comment>
<dbReference type="EMBL" id="CU468135">
    <property type="protein sequence ID" value="CAO95751.1"/>
    <property type="molecule type" value="Genomic_DNA"/>
</dbReference>
<dbReference type="RefSeq" id="WP_012440453.1">
    <property type="nucleotide sequence ID" value="NC_010694.1"/>
</dbReference>
<dbReference type="SMR" id="B2VGR9"/>
<dbReference type="STRING" id="465817.ETA_07050"/>
<dbReference type="KEGG" id="eta:ETA_07050"/>
<dbReference type="eggNOG" id="COG0443">
    <property type="taxonomic scope" value="Bacteria"/>
</dbReference>
<dbReference type="HOGENOM" id="CLU_005965_2_1_6"/>
<dbReference type="OrthoDB" id="9766019at2"/>
<dbReference type="Proteomes" id="UP000001726">
    <property type="component" value="Chromosome"/>
</dbReference>
<dbReference type="GO" id="GO:0005524">
    <property type="term" value="F:ATP binding"/>
    <property type="evidence" value="ECO:0007669"/>
    <property type="project" value="UniProtKB-UniRule"/>
</dbReference>
<dbReference type="GO" id="GO:0140662">
    <property type="term" value="F:ATP-dependent protein folding chaperone"/>
    <property type="evidence" value="ECO:0007669"/>
    <property type="project" value="InterPro"/>
</dbReference>
<dbReference type="GO" id="GO:0051082">
    <property type="term" value="F:unfolded protein binding"/>
    <property type="evidence" value="ECO:0007669"/>
    <property type="project" value="InterPro"/>
</dbReference>
<dbReference type="CDD" id="cd10234">
    <property type="entry name" value="ASKHA_NBD_HSP70_DnaK-like"/>
    <property type="match status" value="1"/>
</dbReference>
<dbReference type="FunFam" id="2.60.34.10:FF:000014">
    <property type="entry name" value="Chaperone protein DnaK HSP70"/>
    <property type="match status" value="1"/>
</dbReference>
<dbReference type="FunFam" id="1.20.1270.10:FF:000001">
    <property type="entry name" value="Molecular chaperone DnaK"/>
    <property type="match status" value="1"/>
</dbReference>
<dbReference type="FunFam" id="3.30.420.40:FF:000004">
    <property type="entry name" value="Molecular chaperone DnaK"/>
    <property type="match status" value="1"/>
</dbReference>
<dbReference type="FunFam" id="3.90.640.10:FF:000003">
    <property type="entry name" value="Molecular chaperone DnaK"/>
    <property type="match status" value="1"/>
</dbReference>
<dbReference type="Gene3D" id="1.20.1270.10">
    <property type="match status" value="1"/>
</dbReference>
<dbReference type="Gene3D" id="3.30.420.40">
    <property type="match status" value="2"/>
</dbReference>
<dbReference type="Gene3D" id="3.90.640.10">
    <property type="entry name" value="Actin, Chain A, domain 4"/>
    <property type="match status" value="1"/>
</dbReference>
<dbReference type="Gene3D" id="2.60.34.10">
    <property type="entry name" value="Substrate Binding Domain Of DNAk, Chain A, domain 1"/>
    <property type="match status" value="1"/>
</dbReference>
<dbReference type="HAMAP" id="MF_00332">
    <property type="entry name" value="DnaK"/>
    <property type="match status" value="1"/>
</dbReference>
<dbReference type="InterPro" id="IPR043129">
    <property type="entry name" value="ATPase_NBD"/>
</dbReference>
<dbReference type="InterPro" id="IPR012725">
    <property type="entry name" value="Chaperone_DnaK"/>
</dbReference>
<dbReference type="InterPro" id="IPR018181">
    <property type="entry name" value="Heat_shock_70_CS"/>
</dbReference>
<dbReference type="InterPro" id="IPR029048">
    <property type="entry name" value="HSP70_C_sf"/>
</dbReference>
<dbReference type="InterPro" id="IPR029047">
    <property type="entry name" value="HSP70_peptide-bd_sf"/>
</dbReference>
<dbReference type="InterPro" id="IPR013126">
    <property type="entry name" value="Hsp_70_fam"/>
</dbReference>
<dbReference type="NCBIfam" id="NF001413">
    <property type="entry name" value="PRK00290.1"/>
    <property type="match status" value="1"/>
</dbReference>
<dbReference type="NCBIfam" id="NF003520">
    <property type="entry name" value="PRK05183.1"/>
    <property type="match status" value="1"/>
</dbReference>
<dbReference type="NCBIfam" id="TIGR02350">
    <property type="entry name" value="prok_dnaK"/>
    <property type="match status" value="1"/>
</dbReference>
<dbReference type="PANTHER" id="PTHR19375">
    <property type="entry name" value="HEAT SHOCK PROTEIN 70KDA"/>
    <property type="match status" value="1"/>
</dbReference>
<dbReference type="Pfam" id="PF00012">
    <property type="entry name" value="HSP70"/>
    <property type="match status" value="1"/>
</dbReference>
<dbReference type="PRINTS" id="PR00301">
    <property type="entry name" value="HEATSHOCK70"/>
</dbReference>
<dbReference type="SUPFAM" id="SSF53067">
    <property type="entry name" value="Actin-like ATPase domain"/>
    <property type="match status" value="2"/>
</dbReference>
<dbReference type="SUPFAM" id="SSF100934">
    <property type="entry name" value="Heat shock protein 70kD (HSP70), C-terminal subdomain"/>
    <property type="match status" value="1"/>
</dbReference>
<dbReference type="SUPFAM" id="SSF100920">
    <property type="entry name" value="Heat shock protein 70kD (HSP70), peptide-binding domain"/>
    <property type="match status" value="1"/>
</dbReference>
<dbReference type="PROSITE" id="PS00297">
    <property type="entry name" value="HSP70_1"/>
    <property type="match status" value="1"/>
</dbReference>
<dbReference type="PROSITE" id="PS00329">
    <property type="entry name" value="HSP70_2"/>
    <property type="match status" value="1"/>
</dbReference>
<dbReference type="PROSITE" id="PS01036">
    <property type="entry name" value="HSP70_3"/>
    <property type="match status" value="1"/>
</dbReference>
<feature type="chain" id="PRO_1000119704" description="Chaperone protein DnaK">
    <location>
        <begin position="1"/>
        <end position="637"/>
    </location>
</feature>
<feature type="region of interest" description="Disordered" evidence="2">
    <location>
        <begin position="532"/>
        <end position="561"/>
    </location>
</feature>
<feature type="region of interest" description="Disordered" evidence="2">
    <location>
        <begin position="603"/>
        <end position="637"/>
    </location>
</feature>
<feature type="compositionally biased region" description="Polar residues" evidence="2">
    <location>
        <begin position="534"/>
        <end position="544"/>
    </location>
</feature>
<feature type="compositionally biased region" description="Basic and acidic residues" evidence="2">
    <location>
        <begin position="548"/>
        <end position="561"/>
    </location>
</feature>
<feature type="compositionally biased region" description="Low complexity" evidence="2">
    <location>
        <begin position="603"/>
        <end position="615"/>
    </location>
</feature>
<feature type="modified residue" description="Phosphothreonine; by autocatalysis" evidence="1">
    <location>
        <position position="199"/>
    </location>
</feature>
<reference key="1">
    <citation type="journal article" date="2008" name="Environ. Microbiol.">
        <title>The genome of Erwinia tasmaniensis strain Et1/99, a non-pathogenic bacterium in the genus Erwinia.</title>
        <authorList>
            <person name="Kube M."/>
            <person name="Migdoll A.M."/>
            <person name="Mueller I."/>
            <person name="Kuhl H."/>
            <person name="Beck A."/>
            <person name="Reinhardt R."/>
            <person name="Geider K."/>
        </authorList>
    </citation>
    <scope>NUCLEOTIDE SEQUENCE [LARGE SCALE GENOMIC DNA]</scope>
    <source>
        <strain>DSM 17950 / CFBP 7177 / CIP 109463 / NCPPB 4357 / Et1/99</strain>
    </source>
</reference>
<evidence type="ECO:0000255" key="1">
    <source>
        <dbReference type="HAMAP-Rule" id="MF_00332"/>
    </source>
</evidence>
<evidence type="ECO:0000256" key="2">
    <source>
        <dbReference type="SAM" id="MobiDB-lite"/>
    </source>
</evidence>
<name>DNAK_ERWT9</name>
<accession>B2VGR9</accession>
<proteinExistence type="inferred from homology"/>